<dbReference type="EMBL" id="AC012463">
    <property type="protein sequence ID" value="AAF99803.1"/>
    <property type="status" value="ALT_SEQ"/>
    <property type="molecule type" value="Genomic_DNA"/>
</dbReference>
<dbReference type="EMBL" id="CP002684">
    <property type="protein sequence ID" value="AEE32215.1"/>
    <property type="molecule type" value="Genomic_DNA"/>
</dbReference>
<dbReference type="PIR" id="F96518">
    <property type="entry name" value="F96518"/>
</dbReference>
<dbReference type="RefSeq" id="NP_175214.1">
    <property type="nucleotide sequence ID" value="NM_103676.1"/>
</dbReference>
<dbReference type="SMR" id="P0C2G5"/>
<dbReference type="FunCoup" id="P0C2G5">
    <property type="interactions" value="3"/>
</dbReference>
<dbReference type="PaxDb" id="3702-AT1G47800.1"/>
<dbReference type="EnsemblPlants" id="AT1G47800.1">
    <property type="protein sequence ID" value="AT1G47800.1"/>
    <property type="gene ID" value="AT1G47800"/>
</dbReference>
<dbReference type="GeneID" id="841194"/>
<dbReference type="Gramene" id="AT1G47800.1">
    <property type="protein sequence ID" value="AT1G47800.1"/>
    <property type="gene ID" value="AT1G47800"/>
</dbReference>
<dbReference type="KEGG" id="ath:AT1G47800"/>
<dbReference type="Araport" id="AT1G47800"/>
<dbReference type="TAIR" id="AT1G47800"/>
<dbReference type="eggNOG" id="ENOG502SXXQ">
    <property type="taxonomic scope" value="Eukaryota"/>
</dbReference>
<dbReference type="HOGENOM" id="CLU_027176_8_0_1"/>
<dbReference type="InParanoid" id="P0C2G5"/>
<dbReference type="PhylomeDB" id="P0C2G5"/>
<dbReference type="PRO" id="PR:P0C2G5"/>
<dbReference type="Proteomes" id="UP000006548">
    <property type="component" value="Chromosome 1"/>
</dbReference>
<dbReference type="ExpressionAtlas" id="P0C2G5">
    <property type="expression patterns" value="baseline"/>
</dbReference>
<dbReference type="InterPro" id="IPR013187">
    <property type="entry name" value="F-box-assoc_dom_typ3"/>
</dbReference>
<dbReference type="InterPro" id="IPR017451">
    <property type="entry name" value="F-box-assoc_interact_dom"/>
</dbReference>
<dbReference type="InterPro" id="IPR036047">
    <property type="entry name" value="F-box-like_dom_sf"/>
</dbReference>
<dbReference type="InterPro" id="IPR001810">
    <property type="entry name" value="F-box_dom"/>
</dbReference>
<dbReference type="NCBIfam" id="TIGR01640">
    <property type="entry name" value="F_box_assoc_1"/>
    <property type="match status" value="1"/>
</dbReference>
<dbReference type="PANTHER" id="PTHR31111">
    <property type="entry name" value="BNAA05G37150D PROTEIN-RELATED"/>
    <property type="match status" value="1"/>
</dbReference>
<dbReference type="PANTHER" id="PTHR31111:SF132">
    <property type="entry name" value="F-BOX ASSOCIATED UBIQUITINATION EFFECTOR FAMILY PROTEIN-RELATED"/>
    <property type="match status" value="1"/>
</dbReference>
<dbReference type="Pfam" id="PF00646">
    <property type="entry name" value="F-box"/>
    <property type="match status" value="1"/>
</dbReference>
<dbReference type="Pfam" id="PF08268">
    <property type="entry name" value="FBA_3"/>
    <property type="match status" value="1"/>
</dbReference>
<dbReference type="SMART" id="SM00256">
    <property type="entry name" value="FBOX"/>
    <property type="match status" value="1"/>
</dbReference>
<dbReference type="SUPFAM" id="SSF81383">
    <property type="entry name" value="F-box domain"/>
    <property type="match status" value="1"/>
</dbReference>
<dbReference type="PROSITE" id="PS50181">
    <property type="entry name" value="FBOX"/>
    <property type="match status" value="1"/>
</dbReference>
<name>FB45_ARATH</name>
<accession>P0C2G5</accession>
<accession>Q9FZF9</accession>
<organism>
    <name type="scientific">Arabidopsis thaliana</name>
    <name type="common">Mouse-ear cress</name>
    <dbReference type="NCBI Taxonomy" id="3702"/>
    <lineage>
        <taxon>Eukaryota</taxon>
        <taxon>Viridiplantae</taxon>
        <taxon>Streptophyta</taxon>
        <taxon>Embryophyta</taxon>
        <taxon>Tracheophyta</taxon>
        <taxon>Spermatophyta</taxon>
        <taxon>Magnoliopsida</taxon>
        <taxon>eudicotyledons</taxon>
        <taxon>Gunneridae</taxon>
        <taxon>Pentapetalae</taxon>
        <taxon>rosids</taxon>
        <taxon>malvids</taxon>
        <taxon>Brassicales</taxon>
        <taxon>Brassicaceae</taxon>
        <taxon>Camelineae</taxon>
        <taxon>Arabidopsis</taxon>
    </lineage>
</organism>
<protein>
    <recommendedName>
        <fullName>Putative F-box protein At1g47800</fullName>
    </recommendedName>
</protein>
<keyword id="KW-1185">Reference proteome</keyword>
<reference key="1">
    <citation type="journal article" date="2000" name="Nature">
        <title>Sequence and analysis of chromosome 1 of the plant Arabidopsis thaliana.</title>
        <authorList>
            <person name="Theologis A."/>
            <person name="Ecker J.R."/>
            <person name="Palm C.J."/>
            <person name="Federspiel N.A."/>
            <person name="Kaul S."/>
            <person name="White O."/>
            <person name="Alonso J."/>
            <person name="Altafi H."/>
            <person name="Araujo R."/>
            <person name="Bowman C.L."/>
            <person name="Brooks S.Y."/>
            <person name="Buehler E."/>
            <person name="Chan A."/>
            <person name="Chao Q."/>
            <person name="Chen H."/>
            <person name="Cheuk R.F."/>
            <person name="Chin C.W."/>
            <person name="Chung M.K."/>
            <person name="Conn L."/>
            <person name="Conway A.B."/>
            <person name="Conway A.R."/>
            <person name="Creasy T.H."/>
            <person name="Dewar K."/>
            <person name="Dunn P."/>
            <person name="Etgu P."/>
            <person name="Feldblyum T.V."/>
            <person name="Feng J.-D."/>
            <person name="Fong B."/>
            <person name="Fujii C.Y."/>
            <person name="Gill J.E."/>
            <person name="Goldsmith A.D."/>
            <person name="Haas B."/>
            <person name="Hansen N.F."/>
            <person name="Hughes B."/>
            <person name="Huizar L."/>
            <person name="Hunter J.L."/>
            <person name="Jenkins J."/>
            <person name="Johnson-Hopson C."/>
            <person name="Khan S."/>
            <person name="Khaykin E."/>
            <person name="Kim C.J."/>
            <person name="Koo H.L."/>
            <person name="Kremenetskaia I."/>
            <person name="Kurtz D.B."/>
            <person name="Kwan A."/>
            <person name="Lam B."/>
            <person name="Langin-Hooper S."/>
            <person name="Lee A."/>
            <person name="Lee J.M."/>
            <person name="Lenz C.A."/>
            <person name="Li J.H."/>
            <person name="Li Y.-P."/>
            <person name="Lin X."/>
            <person name="Liu S.X."/>
            <person name="Liu Z.A."/>
            <person name="Luros J.S."/>
            <person name="Maiti R."/>
            <person name="Marziali A."/>
            <person name="Militscher J."/>
            <person name="Miranda M."/>
            <person name="Nguyen M."/>
            <person name="Nierman W.C."/>
            <person name="Osborne B.I."/>
            <person name="Pai G."/>
            <person name="Peterson J."/>
            <person name="Pham P.K."/>
            <person name="Rizzo M."/>
            <person name="Rooney T."/>
            <person name="Rowley D."/>
            <person name="Sakano H."/>
            <person name="Salzberg S.L."/>
            <person name="Schwartz J.R."/>
            <person name="Shinn P."/>
            <person name="Southwick A.M."/>
            <person name="Sun H."/>
            <person name="Tallon L.J."/>
            <person name="Tambunga G."/>
            <person name="Toriumi M.J."/>
            <person name="Town C.D."/>
            <person name="Utterback T."/>
            <person name="Van Aken S."/>
            <person name="Vaysberg M."/>
            <person name="Vysotskaia V.S."/>
            <person name="Walker M."/>
            <person name="Wu D."/>
            <person name="Yu G."/>
            <person name="Fraser C.M."/>
            <person name="Venter J.C."/>
            <person name="Davis R.W."/>
        </authorList>
    </citation>
    <scope>NUCLEOTIDE SEQUENCE [LARGE SCALE GENOMIC DNA]</scope>
    <source>
        <strain>cv. Columbia</strain>
    </source>
</reference>
<reference key="2">
    <citation type="journal article" date="2017" name="Plant J.">
        <title>Araport11: a complete reannotation of the Arabidopsis thaliana reference genome.</title>
        <authorList>
            <person name="Cheng C.Y."/>
            <person name="Krishnakumar V."/>
            <person name="Chan A.P."/>
            <person name="Thibaud-Nissen F."/>
            <person name="Schobel S."/>
            <person name="Town C.D."/>
        </authorList>
    </citation>
    <scope>GENOME REANNOTATION</scope>
    <source>
        <strain>cv. Columbia</strain>
    </source>
</reference>
<feature type="chain" id="PRO_0000274946" description="Putative F-box protein At1g47800">
    <location>
        <begin position="1"/>
        <end position="387"/>
    </location>
</feature>
<feature type="domain" description="F-box" evidence="1">
    <location>
        <begin position="8"/>
        <end position="54"/>
    </location>
</feature>
<evidence type="ECO:0000255" key="1">
    <source>
        <dbReference type="PROSITE-ProRule" id="PRU00080"/>
    </source>
</evidence>
<evidence type="ECO:0000305" key="2"/>
<comment type="sequence caution" evidence="2">
    <conflict type="erroneous gene model prediction">
        <sequence resource="EMBL-CDS" id="AAF99803"/>
    </conflict>
    <text>The predicted gene At1g47800 has been split into 2 genes: At1g47800 and At1g47810.</text>
</comment>
<sequence length="387" mass="44144">MAETEKNLQSLDHIPIDVLFEILVKLPAKSVARFLCVSKVWATMIRGEVFIRSFTSYSSPQKQPRLLFALVDCLRLYNKMLYFFSKSTLVSTPLLPWDPAPGPPVKPHRFGLFWRARCLRYLPKHYKSLMEELKPKPLVVEEQPDFLSRKELRHENSSYVHGLMSFLCSGEQVIFNPSIGKSITLPTIKTSGIISQSFLGYDPINAQYKVLCLTNVTRFCEHQVLTLGAQNSSWRMIQCSTPHYCGEKSLCIDGILYYSAFTSFTTVLVRFDVRAESLEVASKFPEGLKSSNGITLINYHGKVAVVSKNYHNDHHDFNLWVLEDTKKQQWSNVLVSFHTGVTGQFHGGLEVLGTSDMGEIVFAPNHFEEFVVYFLDQKSNRIRSVLL</sequence>
<gene>
    <name type="ordered locus">At1g47800</name>
    <name type="ORF">T2E6.10</name>
</gene>
<proteinExistence type="predicted"/>